<comment type="similarity">
    <text evidence="1">Belongs to the UPF0262 family.</text>
</comment>
<proteinExistence type="inferred from homology"/>
<sequence length="159" mass="18404">MADDARQKHRLQSVELDEESLAAVSRDQEQERQIAIFDLLEDNYFAPEGAEHGPYDLRMGLVENRLVLDVRGPGYERRHILSLSPFRGLIRDYFMICESYYQAIRNSTPAQIEALDMGRRGLHNEASELLQTRLKGKIETDLDTARRLFTLICALHWRG</sequence>
<feature type="chain" id="PRO_1000131649" description="UPF0262 protein PHZ_c2197">
    <location>
        <begin position="1"/>
        <end position="159"/>
    </location>
</feature>
<keyword id="KW-1185">Reference proteome</keyword>
<accession>B4RET2</accession>
<protein>
    <recommendedName>
        <fullName evidence="1">UPF0262 protein PHZ_c2197</fullName>
    </recommendedName>
</protein>
<gene>
    <name type="ordered locus">PHZ_c2197</name>
</gene>
<dbReference type="EMBL" id="CP000747">
    <property type="protein sequence ID" value="ACG78608.1"/>
    <property type="molecule type" value="Genomic_DNA"/>
</dbReference>
<dbReference type="RefSeq" id="WP_012522749.1">
    <property type="nucleotide sequence ID" value="NC_011144.1"/>
</dbReference>
<dbReference type="STRING" id="450851.PHZ_c2197"/>
<dbReference type="KEGG" id="pzu:PHZ_c2197"/>
<dbReference type="eggNOG" id="COG5328">
    <property type="taxonomic scope" value="Bacteria"/>
</dbReference>
<dbReference type="HOGENOM" id="CLU_112904_0_0_5"/>
<dbReference type="OrthoDB" id="9798434at2"/>
<dbReference type="Proteomes" id="UP000001868">
    <property type="component" value="Chromosome"/>
</dbReference>
<dbReference type="HAMAP" id="MF_00678">
    <property type="entry name" value="UPF0262"/>
    <property type="match status" value="1"/>
</dbReference>
<dbReference type="InterPro" id="IPR008321">
    <property type="entry name" value="UCP032146"/>
</dbReference>
<dbReference type="NCBIfam" id="NF002769">
    <property type="entry name" value="PRK02853.1"/>
    <property type="match status" value="1"/>
</dbReference>
<dbReference type="Pfam" id="PF06793">
    <property type="entry name" value="UPF0262"/>
    <property type="match status" value="1"/>
</dbReference>
<dbReference type="PIRSF" id="PIRSF032146">
    <property type="entry name" value="UCP032146"/>
    <property type="match status" value="1"/>
</dbReference>
<name>Y2197_PHEZH</name>
<reference key="1">
    <citation type="journal article" date="2008" name="BMC Genomics">
        <title>Complete genome of Phenylobacterium zucineum - a novel facultative intracellular bacterium isolated from human erythroleukemia cell line K562.</title>
        <authorList>
            <person name="Luo Y."/>
            <person name="Xu X."/>
            <person name="Ding Z."/>
            <person name="Liu Z."/>
            <person name="Zhang B."/>
            <person name="Yan Z."/>
            <person name="Sun J."/>
            <person name="Hu S."/>
            <person name="Hu X."/>
        </authorList>
    </citation>
    <scope>NUCLEOTIDE SEQUENCE [LARGE SCALE GENOMIC DNA]</scope>
    <source>
        <strain>HLK1</strain>
    </source>
</reference>
<organism>
    <name type="scientific">Phenylobacterium zucineum (strain HLK1)</name>
    <dbReference type="NCBI Taxonomy" id="450851"/>
    <lineage>
        <taxon>Bacteria</taxon>
        <taxon>Pseudomonadati</taxon>
        <taxon>Pseudomonadota</taxon>
        <taxon>Alphaproteobacteria</taxon>
        <taxon>Caulobacterales</taxon>
        <taxon>Caulobacteraceae</taxon>
        <taxon>Phenylobacterium</taxon>
    </lineage>
</organism>
<evidence type="ECO:0000255" key="1">
    <source>
        <dbReference type="HAMAP-Rule" id="MF_00678"/>
    </source>
</evidence>